<keyword id="KW-0001">2Fe-2S</keyword>
<keyword id="KW-0028">Amino-acid biosynthesis</keyword>
<keyword id="KW-0100">Branched-chain amino acid biosynthesis</keyword>
<keyword id="KW-0408">Iron</keyword>
<keyword id="KW-0411">Iron-sulfur</keyword>
<keyword id="KW-0456">Lyase</keyword>
<keyword id="KW-0460">Magnesium</keyword>
<keyword id="KW-0479">Metal-binding</keyword>
<evidence type="ECO:0000255" key="1">
    <source>
        <dbReference type="HAMAP-Rule" id="MF_00012"/>
    </source>
</evidence>
<name>ILVD_ACIB3</name>
<accession>B7GUZ8</accession>
<feature type="chain" id="PRO_1000190645" description="Dihydroxy-acid dehydratase">
    <location>
        <begin position="1"/>
        <end position="609"/>
    </location>
</feature>
<feature type="active site" description="Proton acceptor" evidence="1">
    <location>
        <position position="517"/>
    </location>
</feature>
<feature type="binding site" evidence="1">
    <location>
        <position position="81"/>
    </location>
    <ligand>
        <name>Mg(2+)</name>
        <dbReference type="ChEBI" id="CHEBI:18420"/>
    </ligand>
</feature>
<feature type="binding site" evidence="1">
    <location>
        <position position="122"/>
    </location>
    <ligand>
        <name>[2Fe-2S] cluster</name>
        <dbReference type="ChEBI" id="CHEBI:190135"/>
    </ligand>
</feature>
<feature type="binding site" evidence="1">
    <location>
        <position position="123"/>
    </location>
    <ligand>
        <name>Mg(2+)</name>
        <dbReference type="ChEBI" id="CHEBI:18420"/>
    </ligand>
</feature>
<feature type="binding site" description="via carbamate group" evidence="1">
    <location>
        <position position="124"/>
    </location>
    <ligand>
        <name>Mg(2+)</name>
        <dbReference type="ChEBI" id="CHEBI:18420"/>
    </ligand>
</feature>
<feature type="binding site" evidence="1">
    <location>
        <position position="195"/>
    </location>
    <ligand>
        <name>[2Fe-2S] cluster</name>
        <dbReference type="ChEBI" id="CHEBI:190135"/>
    </ligand>
</feature>
<feature type="binding site" evidence="1">
    <location>
        <position position="491"/>
    </location>
    <ligand>
        <name>Mg(2+)</name>
        <dbReference type="ChEBI" id="CHEBI:18420"/>
    </ligand>
</feature>
<feature type="modified residue" description="N6-carboxylysine" evidence="1">
    <location>
        <position position="124"/>
    </location>
</feature>
<protein>
    <recommendedName>
        <fullName evidence="1">Dihydroxy-acid dehydratase</fullName>
        <shortName evidence="1">DAD</shortName>
        <ecNumber evidence="1">4.2.1.9</ecNumber>
    </recommendedName>
</protein>
<proteinExistence type="inferred from homology"/>
<comment type="function">
    <text evidence="1">Functions in the biosynthesis of branched-chain amino acids. Catalyzes the dehydration of (2R,3R)-2,3-dihydroxy-3-methylpentanoate (2,3-dihydroxy-3-methylvalerate) into 2-oxo-3-methylpentanoate (2-oxo-3-methylvalerate) and of (2R)-2,3-dihydroxy-3-methylbutanoate (2,3-dihydroxyisovalerate) into 2-oxo-3-methylbutanoate (2-oxoisovalerate), the penultimate precursor to L-isoleucine and L-valine, respectively.</text>
</comment>
<comment type="catalytic activity">
    <reaction evidence="1">
        <text>(2R)-2,3-dihydroxy-3-methylbutanoate = 3-methyl-2-oxobutanoate + H2O</text>
        <dbReference type="Rhea" id="RHEA:24809"/>
        <dbReference type="ChEBI" id="CHEBI:11851"/>
        <dbReference type="ChEBI" id="CHEBI:15377"/>
        <dbReference type="ChEBI" id="CHEBI:49072"/>
        <dbReference type="EC" id="4.2.1.9"/>
    </reaction>
    <physiologicalReaction direction="left-to-right" evidence="1">
        <dbReference type="Rhea" id="RHEA:24810"/>
    </physiologicalReaction>
</comment>
<comment type="catalytic activity">
    <reaction evidence="1">
        <text>(2R,3R)-2,3-dihydroxy-3-methylpentanoate = (S)-3-methyl-2-oxopentanoate + H2O</text>
        <dbReference type="Rhea" id="RHEA:27694"/>
        <dbReference type="ChEBI" id="CHEBI:15377"/>
        <dbReference type="ChEBI" id="CHEBI:35146"/>
        <dbReference type="ChEBI" id="CHEBI:49258"/>
        <dbReference type="EC" id="4.2.1.9"/>
    </reaction>
    <physiologicalReaction direction="left-to-right" evidence="1">
        <dbReference type="Rhea" id="RHEA:27695"/>
    </physiologicalReaction>
</comment>
<comment type="cofactor">
    <cofactor evidence="1">
        <name>[2Fe-2S] cluster</name>
        <dbReference type="ChEBI" id="CHEBI:190135"/>
    </cofactor>
    <text evidence="1">Binds 1 [2Fe-2S] cluster per subunit. This cluster acts as a Lewis acid cofactor.</text>
</comment>
<comment type="cofactor">
    <cofactor evidence="1">
        <name>Mg(2+)</name>
        <dbReference type="ChEBI" id="CHEBI:18420"/>
    </cofactor>
</comment>
<comment type="pathway">
    <text evidence="1">Amino-acid biosynthesis; L-isoleucine biosynthesis; L-isoleucine from 2-oxobutanoate: step 3/4.</text>
</comment>
<comment type="pathway">
    <text evidence="1">Amino-acid biosynthesis; L-valine biosynthesis; L-valine from pyruvate: step 3/4.</text>
</comment>
<comment type="subunit">
    <text evidence="1">Homodimer.</text>
</comment>
<comment type="similarity">
    <text evidence="1">Belongs to the IlvD/Edd family.</text>
</comment>
<organism>
    <name type="scientific">Acinetobacter baumannii (strain AB307-0294)</name>
    <dbReference type="NCBI Taxonomy" id="557600"/>
    <lineage>
        <taxon>Bacteria</taxon>
        <taxon>Pseudomonadati</taxon>
        <taxon>Pseudomonadota</taxon>
        <taxon>Gammaproteobacteria</taxon>
        <taxon>Moraxellales</taxon>
        <taxon>Moraxellaceae</taxon>
        <taxon>Acinetobacter</taxon>
        <taxon>Acinetobacter calcoaceticus/baumannii complex</taxon>
    </lineage>
</organism>
<sequence length="609" mass="65327">MPDYRSKTSTHGRNMAGARGLWRATGMKDEDFGKPIIAVVNSFTQFVPGHVHLKDLGQLVAAEIQAAGGVAKEFNTIAVDDGIAMGHDGMLYSLPSRDLIADSVEYMVNAHCADAMVCISNCDKITPGMLMAAMRLNIPVVFVSGGPMEAGKVKFRGDEKAIDLVDAMVVAADDSYTDEEVAEFERSACPTCGSCSGMFTANSMNCLTEALGLSLPGNGSIVATHANRKKLFLKAGQLIVELAKRYYEQNDASILPRSIATKAAFKNAMTLDIAMGGSTNTVLHLLAAANEAEVDFTMDDIDELSRRVPVLSKVAPAKQDVHMEDVHRAGGIMAILGELDRANLLDVSVPTVHEKTLKDALDKWDIIRTEDPDVYEFYRSSPGGVPTQVAFSQNRYYSTLDGDREKGVIRNAEHAFSKDGGLAVLYGNIALDGCIVKTAGVDESILKFTGSARVFESQDAAVEAILGNEIKAGDVVIIRYEGPRGGPGMQEMLYPTSYLKSKGLGKDCALVTDGRFSGGSSGLSIGHVSPEAAEGGAIGLVEDGDTIEIDIPNRTIHLNIDDATLAHRRTVQEAKGWHPKEERKRKVSKALKVYAMHTTSAAKGAVRVL</sequence>
<dbReference type="EC" id="4.2.1.9" evidence="1"/>
<dbReference type="EMBL" id="CP001172">
    <property type="protein sequence ID" value="ACJ57389.1"/>
    <property type="molecule type" value="Genomic_DNA"/>
</dbReference>
<dbReference type="RefSeq" id="WP_001113590.1">
    <property type="nucleotide sequence ID" value="NZ_CP001172.1"/>
</dbReference>
<dbReference type="SMR" id="B7GUZ8"/>
<dbReference type="HOGENOM" id="CLU_014271_4_2_6"/>
<dbReference type="UniPathway" id="UPA00047">
    <property type="reaction ID" value="UER00057"/>
</dbReference>
<dbReference type="UniPathway" id="UPA00049">
    <property type="reaction ID" value="UER00061"/>
</dbReference>
<dbReference type="Proteomes" id="UP000006924">
    <property type="component" value="Chromosome"/>
</dbReference>
<dbReference type="GO" id="GO:0005829">
    <property type="term" value="C:cytosol"/>
    <property type="evidence" value="ECO:0007669"/>
    <property type="project" value="TreeGrafter"/>
</dbReference>
<dbReference type="GO" id="GO:0051537">
    <property type="term" value="F:2 iron, 2 sulfur cluster binding"/>
    <property type="evidence" value="ECO:0007669"/>
    <property type="project" value="UniProtKB-UniRule"/>
</dbReference>
<dbReference type="GO" id="GO:0004160">
    <property type="term" value="F:dihydroxy-acid dehydratase activity"/>
    <property type="evidence" value="ECO:0007669"/>
    <property type="project" value="UniProtKB-UniRule"/>
</dbReference>
<dbReference type="GO" id="GO:0000287">
    <property type="term" value="F:magnesium ion binding"/>
    <property type="evidence" value="ECO:0007669"/>
    <property type="project" value="UniProtKB-UniRule"/>
</dbReference>
<dbReference type="GO" id="GO:0009097">
    <property type="term" value="P:isoleucine biosynthetic process"/>
    <property type="evidence" value="ECO:0007669"/>
    <property type="project" value="UniProtKB-UniRule"/>
</dbReference>
<dbReference type="GO" id="GO:0009099">
    <property type="term" value="P:L-valine biosynthetic process"/>
    <property type="evidence" value="ECO:0007669"/>
    <property type="project" value="UniProtKB-UniRule"/>
</dbReference>
<dbReference type="FunFam" id="3.50.30.80:FF:000001">
    <property type="entry name" value="Dihydroxy-acid dehydratase"/>
    <property type="match status" value="1"/>
</dbReference>
<dbReference type="Gene3D" id="3.50.30.80">
    <property type="entry name" value="IlvD/EDD C-terminal domain-like"/>
    <property type="match status" value="1"/>
</dbReference>
<dbReference type="HAMAP" id="MF_00012">
    <property type="entry name" value="IlvD"/>
    <property type="match status" value="1"/>
</dbReference>
<dbReference type="InterPro" id="IPR042096">
    <property type="entry name" value="Dihydro-acid_dehy_C"/>
</dbReference>
<dbReference type="InterPro" id="IPR004404">
    <property type="entry name" value="DihydroxyA_deHydtase"/>
</dbReference>
<dbReference type="InterPro" id="IPR020558">
    <property type="entry name" value="DiOHA_6PGluconate_deHydtase_CS"/>
</dbReference>
<dbReference type="InterPro" id="IPR056740">
    <property type="entry name" value="ILV_EDD_C"/>
</dbReference>
<dbReference type="InterPro" id="IPR000581">
    <property type="entry name" value="ILV_EDD_N"/>
</dbReference>
<dbReference type="InterPro" id="IPR037237">
    <property type="entry name" value="IlvD/EDD_N"/>
</dbReference>
<dbReference type="NCBIfam" id="TIGR00110">
    <property type="entry name" value="ilvD"/>
    <property type="match status" value="1"/>
</dbReference>
<dbReference type="NCBIfam" id="NF009103">
    <property type="entry name" value="PRK12448.1"/>
    <property type="match status" value="1"/>
</dbReference>
<dbReference type="PANTHER" id="PTHR43661">
    <property type="entry name" value="D-XYLONATE DEHYDRATASE"/>
    <property type="match status" value="1"/>
</dbReference>
<dbReference type="PANTHER" id="PTHR43661:SF3">
    <property type="entry name" value="D-XYLONATE DEHYDRATASE YAGF-RELATED"/>
    <property type="match status" value="1"/>
</dbReference>
<dbReference type="Pfam" id="PF24877">
    <property type="entry name" value="ILV_EDD_C"/>
    <property type="match status" value="1"/>
</dbReference>
<dbReference type="Pfam" id="PF00920">
    <property type="entry name" value="ILVD_EDD_N"/>
    <property type="match status" value="1"/>
</dbReference>
<dbReference type="SUPFAM" id="SSF143975">
    <property type="entry name" value="IlvD/EDD N-terminal domain-like"/>
    <property type="match status" value="1"/>
</dbReference>
<dbReference type="SUPFAM" id="SSF52016">
    <property type="entry name" value="LeuD/IlvD-like"/>
    <property type="match status" value="1"/>
</dbReference>
<dbReference type="PROSITE" id="PS00886">
    <property type="entry name" value="ILVD_EDD_1"/>
    <property type="match status" value="1"/>
</dbReference>
<dbReference type="PROSITE" id="PS00887">
    <property type="entry name" value="ILVD_EDD_2"/>
    <property type="match status" value="1"/>
</dbReference>
<gene>
    <name evidence="1" type="primary">ilvD</name>
    <name type="ordered locus">ABBFA_000026</name>
</gene>
<reference key="1">
    <citation type="journal article" date="2008" name="J. Bacteriol.">
        <title>Comparative genome sequence analysis of multidrug-resistant Acinetobacter baumannii.</title>
        <authorList>
            <person name="Adams M.D."/>
            <person name="Goglin K."/>
            <person name="Molyneaux N."/>
            <person name="Hujer K.M."/>
            <person name="Lavender H."/>
            <person name="Jamison J.J."/>
            <person name="MacDonald I.J."/>
            <person name="Martin K.M."/>
            <person name="Russo T."/>
            <person name="Campagnari A.A."/>
            <person name="Hujer A.M."/>
            <person name="Bonomo R.A."/>
            <person name="Gill S.R."/>
        </authorList>
    </citation>
    <scope>NUCLEOTIDE SEQUENCE [LARGE SCALE GENOMIC DNA]</scope>
    <source>
        <strain>AB307-0294</strain>
    </source>
</reference>